<sequence>MRVNITLACTECGDRNYITTKNKRNNPERIEMKKYCPRLNKYTLHRETK</sequence>
<gene>
    <name type="primary">rpmG2</name>
    <name type="ordered locus">SE_1017</name>
</gene>
<feature type="chain" id="PRO_0000170230" description="Large ribosomal subunit protein bL33B">
    <location>
        <begin position="1"/>
        <end position="49"/>
    </location>
</feature>
<comment type="similarity">
    <text evidence="2">Belongs to the bacterial ribosomal protein bL33 family.</text>
</comment>
<comment type="sequence caution" evidence="2">
    <conflict type="erroneous initiation">
        <sequence resource="EMBL-CDS" id="AAO04614"/>
    </conflict>
    <text>Extended N-terminus.</text>
</comment>
<proteinExistence type="inferred from homology"/>
<protein>
    <recommendedName>
        <fullName evidence="1">Large ribosomal subunit protein bL33B</fullName>
    </recommendedName>
    <alternativeName>
        <fullName>50S ribosomal protein L33 2</fullName>
    </alternativeName>
</protein>
<keyword id="KW-0687">Ribonucleoprotein</keyword>
<keyword id="KW-0689">Ribosomal protein</keyword>
<evidence type="ECO:0000255" key="1">
    <source>
        <dbReference type="HAMAP-Rule" id="MF_00294"/>
    </source>
</evidence>
<evidence type="ECO:0000305" key="2"/>
<dbReference type="EMBL" id="AE015929">
    <property type="protein sequence ID" value="AAO04614.1"/>
    <property type="status" value="ALT_INIT"/>
    <property type="molecule type" value="Genomic_DNA"/>
</dbReference>
<dbReference type="RefSeq" id="NP_764572.2">
    <property type="nucleotide sequence ID" value="NC_004461.1"/>
</dbReference>
<dbReference type="SMR" id="Q8CSP9"/>
<dbReference type="KEGG" id="sep:SE_1017"/>
<dbReference type="PATRIC" id="fig|176280.10.peg.992"/>
<dbReference type="eggNOG" id="COG0267">
    <property type="taxonomic scope" value="Bacteria"/>
</dbReference>
<dbReference type="HOGENOM" id="CLU_190949_0_2_9"/>
<dbReference type="OrthoDB" id="197660at2"/>
<dbReference type="PRO" id="PR:Q8CSP9"/>
<dbReference type="Proteomes" id="UP000001411">
    <property type="component" value="Chromosome"/>
</dbReference>
<dbReference type="GO" id="GO:0005737">
    <property type="term" value="C:cytoplasm"/>
    <property type="evidence" value="ECO:0007669"/>
    <property type="project" value="UniProtKB-ARBA"/>
</dbReference>
<dbReference type="GO" id="GO:1990904">
    <property type="term" value="C:ribonucleoprotein complex"/>
    <property type="evidence" value="ECO:0007669"/>
    <property type="project" value="UniProtKB-KW"/>
</dbReference>
<dbReference type="GO" id="GO:0005840">
    <property type="term" value="C:ribosome"/>
    <property type="evidence" value="ECO:0007669"/>
    <property type="project" value="UniProtKB-KW"/>
</dbReference>
<dbReference type="GO" id="GO:0003735">
    <property type="term" value="F:structural constituent of ribosome"/>
    <property type="evidence" value="ECO:0007669"/>
    <property type="project" value="InterPro"/>
</dbReference>
<dbReference type="GO" id="GO:0006412">
    <property type="term" value="P:translation"/>
    <property type="evidence" value="ECO:0007669"/>
    <property type="project" value="UniProtKB-UniRule"/>
</dbReference>
<dbReference type="Gene3D" id="2.20.28.120">
    <property type="entry name" value="Ribosomal protein L33"/>
    <property type="match status" value="1"/>
</dbReference>
<dbReference type="HAMAP" id="MF_00294">
    <property type="entry name" value="Ribosomal_bL33"/>
    <property type="match status" value="1"/>
</dbReference>
<dbReference type="InterPro" id="IPR001705">
    <property type="entry name" value="Ribosomal_bL33"/>
</dbReference>
<dbReference type="InterPro" id="IPR018264">
    <property type="entry name" value="Ribosomal_bL33_CS"/>
</dbReference>
<dbReference type="InterPro" id="IPR038584">
    <property type="entry name" value="Ribosomal_bL33_sf"/>
</dbReference>
<dbReference type="InterPro" id="IPR011332">
    <property type="entry name" value="Ribosomal_zn-bd"/>
</dbReference>
<dbReference type="NCBIfam" id="NF001764">
    <property type="entry name" value="PRK00504.1"/>
    <property type="match status" value="1"/>
</dbReference>
<dbReference type="NCBIfam" id="NF001860">
    <property type="entry name" value="PRK00595.1"/>
    <property type="match status" value="1"/>
</dbReference>
<dbReference type="NCBIfam" id="TIGR01023">
    <property type="entry name" value="rpmG_bact"/>
    <property type="match status" value="1"/>
</dbReference>
<dbReference type="PANTHER" id="PTHR43168">
    <property type="entry name" value="50S RIBOSOMAL PROTEIN L33, CHLOROPLASTIC"/>
    <property type="match status" value="1"/>
</dbReference>
<dbReference type="PANTHER" id="PTHR43168:SF2">
    <property type="entry name" value="LARGE RIBOSOMAL SUBUNIT PROTEIN BL33C"/>
    <property type="match status" value="1"/>
</dbReference>
<dbReference type="Pfam" id="PF00471">
    <property type="entry name" value="Ribosomal_L33"/>
    <property type="match status" value="1"/>
</dbReference>
<dbReference type="SUPFAM" id="SSF57829">
    <property type="entry name" value="Zn-binding ribosomal proteins"/>
    <property type="match status" value="1"/>
</dbReference>
<dbReference type="PROSITE" id="PS00582">
    <property type="entry name" value="RIBOSOMAL_L33"/>
    <property type="match status" value="1"/>
</dbReference>
<organism>
    <name type="scientific">Staphylococcus epidermidis (strain ATCC 12228 / FDA PCI 1200)</name>
    <dbReference type="NCBI Taxonomy" id="176280"/>
    <lineage>
        <taxon>Bacteria</taxon>
        <taxon>Bacillati</taxon>
        <taxon>Bacillota</taxon>
        <taxon>Bacilli</taxon>
        <taxon>Bacillales</taxon>
        <taxon>Staphylococcaceae</taxon>
        <taxon>Staphylococcus</taxon>
    </lineage>
</organism>
<reference key="1">
    <citation type="journal article" date="2003" name="Mol. Microbiol.">
        <title>Genome-based analysis of virulence genes in a non-biofilm-forming Staphylococcus epidermidis strain (ATCC 12228).</title>
        <authorList>
            <person name="Zhang Y.-Q."/>
            <person name="Ren S.-X."/>
            <person name="Li H.-L."/>
            <person name="Wang Y.-X."/>
            <person name="Fu G."/>
            <person name="Yang J."/>
            <person name="Qin Z.-Q."/>
            <person name="Miao Y.-G."/>
            <person name="Wang W.-Y."/>
            <person name="Chen R.-S."/>
            <person name="Shen Y."/>
            <person name="Chen Z."/>
            <person name="Yuan Z.-H."/>
            <person name="Zhao G.-P."/>
            <person name="Qu D."/>
            <person name="Danchin A."/>
            <person name="Wen Y.-M."/>
        </authorList>
    </citation>
    <scope>NUCLEOTIDE SEQUENCE [LARGE SCALE GENOMIC DNA]</scope>
    <source>
        <strain>ATCC 12228 / FDA PCI 1200</strain>
    </source>
</reference>
<accession>Q8CSP9</accession>
<name>RL332_STAES</name>